<gene>
    <name evidence="1" type="primary">bchL</name>
    <name type="ordered locus">CT2150</name>
</gene>
<sequence length="276" mass="29494">MSLVLAVYGKGGIGKSTTSANISAALALKGAKVLQIGCDPKHDSTFPITGKLQKTVIEALEEVDFHHEELSPEDIVETGFAGIDGLEAGGPPAGSGCGGYVVGESVTLLQEMGVYDKYDVILFDVLGDVVCGGFSAPLNYADYAVIIATNDFDSIFAANRLCMAIQQKSVRYKVQLAGIVANRVDYTKGGGTNMLDQFAEQVGTRLLAKVPYHELIRKSRFAGKTLFAMDPNEPELAECLAPYNEIADQILSEKPIASVPKPIGDREIFDIVGGWQ</sequence>
<keyword id="KW-0004">4Fe-4S</keyword>
<keyword id="KW-0067">ATP-binding</keyword>
<keyword id="KW-0077">Bacteriochlorophyll biosynthesis</keyword>
<keyword id="KW-0149">Chlorophyll biosynthesis</keyword>
<keyword id="KW-0408">Iron</keyword>
<keyword id="KW-0411">Iron-sulfur</keyword>
<keyword id="KW-0460">Magnesium</keyword>
<keyword id="KW-0479">Metal-binding</keyword>
<keyword id="KW-0547">Nucleotide-binding</keyword>
<keyword id="KW-0560">Oxidoreductase</keyword>
<keyword id="KW-0602">Photosynthesis</keyword>
<keyword id="KW-1185">Reference proteome</keyword>
<dbReference type="EC" id="1.3.7.7" evidence="1"/>
<dbReference type="EMBL" id="AF287482">
    <property type="protein sequence ID" value="AAG12203.1"/>
    <property type="molecule type" value="Genomic_DNA"/>
</dbReference>
<dbReference type="EMBL" id="AE006470">
    <property type="protein sequence ID" value="AAM73366.1"/>
    <property type="molecule type" value="Genomic_DNA"/>
</dbReference>
<dbReference type="RefSeq" id="NP_663024.1">
    <property type="nucleotide sequence ID" value="NC_002932.3"/>
</dbReference>
<dbReference type="RefSeq" id="WP_010933803.1">
    <property type="nucleotide sequence ID" value="NC_002932.3"/>
</dbReference>
<dbReference type="SMR" id="Q9F714"/>
<dbReference type="STRING" id="194439.CT2150"/>
<dbReference type="EnsemblBacteria" id="AAM73366">
    <property type="protein sequence ID" value="AAM73366"/>
    <property type="gene ID" value="CT2150"/>
</dbReference>
<dbReference type="KEGG" id="cte:CT2150"/>
<dbReference type="PATRIC" id="fig|194439.7.peg.1950"/>
<dbReference type="eggNOG" id="COG1348">
    <property type="taxonomic scope" value="Bacteria"/>
</dbReference>
<dbReference type="HOGENOM" id="CLU_059373_2_0_10"/>
<dbReference type="OrthoDB" id="9778641at2"/>
<dbReference type="UniPathway" id="UPA00671"/>
<dbReference type="Proteomes" id="UP000001007">
    <property type="component" value="Chromosome"/>
</dbReference>
<dbReference type="GO" id="GO:0051539">
    <property type="term" value="F:4 iron, 4 sulfur cluster binding"/>
    <property type="evidence" value="ECO:0007669"/>
    <property type="project" value="UniProtKB-UniRule"/>
</dbReference>
<dbReference type="GO" id="GO:0005524">
    <property type="term" value="F:ATP binding"/>
    <property type="evidence" value="ECO:0007669"/>
    <property type="project" value="UniProtKB-UniRule"/>
</dbReference>
<dbReference type="GO" id="GO:0046872">
    <property type="term" value="F:metal ion binding"/>
    <property type="evidence" value="ECO:0007669"/>
    <property type="project" value="UniProtKB-KW"/>
</dbReference>
<dbReference type="GO" id="GO:0016730">
    <property type="term" value="F:oxidoreductase activity, acting on iron-sulfur proteins as donors"/>
    <property type="evidence" value="ECO:0007669"/>
    <property type="project" value="InterPro"/>
</dbReference>
<dbReference type="GO" id="GO:0016636">
    <property type="term" value="F:oxidoreductase activity, acting on the CH-CH group of donors, iron-sulfur protein as acceptor"/>
    <property type="evidence" value="ECO:0007669"/>
    <property type="project" value="UniProtKB-UniRule"/>
</dbReference>
<dbReference type="GO" id="GO:0036070">
    <property type="term" value="P:light-independent bacteriochlorophyll biosynthetic process"/>
    <property type="evidence" value="ECO:0007669"/>
    <property type="project" value="UniProtKB-UniRule"/>
</dbReference>
<dbReference type="GO" id="GO:0019685">
    <property type="term" value="P:photosynthesis, dark reaction"/>
    <property type="evidence" value="ECO:0007669"/>
    <property type="project" value="InterPro"/>
</dbReference>
<dbReference type="CDD" id="cd02032">
    <property type="entry name" value="Bchl-like"/>
    <property type="match status" value="1"/>
</dbReference>
<dbReference type="Gene3D" id="3.40.50.300">
    <property type="entry name" value="P-loop containing nucleotide triphosphate hydrolases"/>
    <property type="match status" value="1"/>
</dbReference>
<dbReference type="HAMAP" id="MF_00355">
    <property type="entry name" value="ChlL_BchL"/>
    <property type="match status" value="1"/>
</dbReference>
<dbReference type="InterPro" id="IPR030655">
    <property type="entry name" value="NifH/chlL_CS"/>
</dbReference>
<dbReference type="InterPro" id="IPR000392">
    <property type="entry name" value="NifH/frxC"/>
</dbReference>
<dbReference type="InterPro" id="IPR027417">
    <property type="entry name" value="P-loop_NTPase"/>
</dbReference>
<dbReference type="InterPro" id="IPR005971">
    <property type="entry name" value="Protochlorophyllide_ATP-bd"/>
</dbReference>
<dbReference type="NCBIfam" id="TIGR01281">
    <property type="entry name" value="DPOR_bchL"/>
    <property type="match status" value="1"/>
</dbReference>
<dbReference type="PANTHER" id="PTHR42864">
    <property type="entry name" value="LIGHT-INDEPENDENT PROTOCHLOROPHYLLIDE REDUCTASE IRON-SULFUR ATP-BINDING PROTEIN"/>
    <property type="match status" value="1"/>
</dbReference>
<dbReference type="PANTHER" id="PTHR42864:SF2">
    <property type="entry name" value="LIGHT-INDEPENDENT PROTOCHLOROPHYLLIDE REDUCTASE IRON-SULFUR ATP-BINDING PROTEIN"/>
    <property type="match status" value="1"/>
</dbReference>
<dbReference type="Pfam" id="PF00142">
    <property type="entry name" value="Fer4_NifH"/>
    <property type="match status" value="1"/>
</dbReference>
<dbReference type="PIRSF" id="PIRSF000363">
    <property type="entry name" value="Nitrogenase_iron"/>
    <property type="match status" value="1"/>
</dbReference>
<dbReference type="PRINTS" id="PR00091">
    <property type="entry name" value="NITROGNASEII"/>
</dbReference>
<dbReference type="SUPFAM" id="SSF52540">
    <property type="entry name" value="P-loop containing nucleoside triphosphate hydrolases"/>
    <property type="match status" value="1"/>
</dbReference>
<dbReference type="PROSITE" id="PS00746">
    <property type="entry name" value="NIFH_FRXC_1"/>
    <property type="match status" value="1"/>
</dbReference>
<dbReference type="PROSITE" id="PS00692">
    <property type="entry name" value="NIFH_FRXC_2"/>
    <property type="match status" value="1"/>
</dbReference>
<dbReference type="PROSITE" id="PS51026">
    <property type="entry name" value="NIFH_FRXC_3"/>
    <property type="match status" value="1"/>
</dbReference>
<accession>Q9F714</accession>
<organism>
    <name type="scientific">Chlorobaculum tepidum (strain ATCC 49652 / DSM 12025 / NBRC 103806 / TLS)</name>
    <name type="common">Chlorobium tepidum</name>
    <dbReference type="NCBI Taxonomy" id="194439"/>
    <lineage>
        <taxon>Bacteria</taxon>
        <taxon>Pseudomonadati</taxon>
        <taxon>Chlorobiota</taxon>
        <taxon>Chlorobiia</taxon>
        <taxon>Chlorobiales</taxon>
        <taxon>Chlorobiaceae</taxon>
        <taxon>Chlorobaculum</taxon>
    </lineage>
</organism>
<protein>
    <recommendedName>
        <fullName evidence="1">Light-independent protochlorophyllide reductase iron-sulfur ATP-binding protein</fullName>
        <shortName evidence="1">DPOR subunit L</shortName>
        <shortName evidence="1">LI-POR subunit L</shortName>
        <ecNumber evidence="1">1.3.7.7</ecNumber>
    </recommendedName>
</protein>
<reference key="1">
    <citation type="journal article" date="2000" name="Science">
        <title>Molecular evidence for the early evolution of photosynthesis.</title>
        <authorList>
            <person name="Xiong J."/>
            <person name="Fischer W.M."/>
            <person name="Inoue K."/>
            <person name="Nakahara M."/>
            <person name="Bauer C.E."/>
        </authorList>
    </citation>
    <scope>NUCLEOTIDE SEQUENCE [GENOMIC DNA]</scope>
    <source>
        <strain>ATCC 49652 / DSM 12025 / NBRC 103806 / TLS</strain>
    </source>
</reference>
<reference key="2">
    <citation type="journal article" date="2002" name="Proc. Natl. Acad. Sci. U.S.A.">
        <title>The complete genome sequence of Chlorobium tepidum TLS, a photosynthetic, anaerobic, green-sulfur bacterium.</title>
        <authorList>
            <person name="Eisen J.A."/>
            <person name="Nelson K.E."/>
            <person name="Paulsen I.T."/>
            <person name="Heidelberg J.F."/>
            <person name="Wu M."/>
            <person name="Dodson R.J."/>
            <person name="DeBoy R.T."/>
            <person name="Gwinn M.L."/>
            <person name="Nelson W.C."/>
            <person name="Haft D.H."/>
            <person name="Hickey E.K."/>
            <person name="Peterson J.D."/>
            <person name="Durkin A.S."/>
            <person name="Kolonay J.F."/>
            <person name="Yang F."/>
            <person name="Holt I.E."/>
            <person name="Umayam L.A."/>
            <person name="Mason T.M."/>
            <person name="Brenner M."/>
            <person name="Shea T.P."/>
            <person name="Parksey D.S."/>
            <person name="Nierman W.C."/>
            <person name="Feldblyum T.V."/>
            <person name="Hansen C.L."/>
            <person name="Craven M.B."/>
            <person name="Radune D."/>
            <person name="Vamathevan J.J."/>
            <person name="Khouri H.M."/>
            <person name="White O."/>
            <person name="Gruber T.M."/>
            <person name="Ketchum K.A."/>
            <person name="Venter J.C."/>
            <person name="Tettelin H."/>
            <person name="Bryant D.A."/>
            <person name="Fraser C.M."/>
        </authorList>
    </citation>
    <scope>NUCLEOTIDE SEQUENCE [LARGE SCALE GENOMIC DNA]</scope>
    <source>
        <strain>ATCC 49652 / DSM 12025 / NBRC 103806 / TLS</strain>
    </source>
</reference>
<feature type="chain" id="PRO_0000139577" description="Light-independent protochlorophyllide reductase iron-sulfur ATP-binding protein">
    <location>
        <begin position="1"/>
        <end position="276"/>
    </location>
</feature>
<feature type="binding site" evidence="1">
    <location>
        <begin position="12"/>
        <end position="17"/>
    </location>
    <ligand>
        <name>ATP</name>
        <dbReference type="ChEBI" id="CHEBI:30616"/>
    </ligand>
</feature>
<feature type="binding site" evidence="1">
    <location>
        <position position="16"/>
    </location>
    <ligand>
        <name>Mg(2+)</name>
        <dbReference type="ChEBI" id="CHEBI:18420"/>
    </ligand>
</feature>
<feature type="binding site" evidence="1">
    <location>
        <position position="41"/>
    </location>
    <ligand>
        <name>ATP</name>
        <dbReference type="ChEBI" id="CHEBI:30616"/>
    </ligand>
</feature>
<feature type="binding site" evidence="1">
    <location>
        <position position="97"/>
    </location>
    <ligand>
        <name>[4Fe-4S] cluster</name>
        <dbReference type="ChEBI" id="CHEBI:49883"/>
        <note>ligand shared between dimeric partners</note>
    </ligand>
</feature>
<feature type="binding site" evidence="1">
    <location>
        <position position="131"/>
    </location>
    <ligand>
        <name>[4Fe-4S] cluster</name>
        <dbReference type="ChEBI" id="CHEBI:49883"/>
        <note>ligand shared between dimeric partners</note>
    </ligand>
</feature>
<feature type="binding site" evidence="1">
    <location>
        <begin position="182"/>
        <end position="183"/>
    </location>
    <ligand>
        <name>ATP</name>
        <dbReference type="ChEBI" id="CHEBI:30616"/>
    </ligand>
</feature>
<name>BCHL_CHLTE</name>
<comment type="function">
    <text evidence="1">Component of the dark-operative protochlorophyllide reductase (DPOR) that uses Mg-ATP and reduced ferredoxin to reduce ring D of protochlorophyllide (Pchlide) to form chlorophyllide a (Chlide). This reaction is light-independent. The L component serves as a unique electron donor to the NB-component of the complex, and binds Mg-ATP.</text>
</comment>
<comment type="catalytic activity">
    <reaction evidence="1">
        <text>chlorophyllide a + oxidized 2[4Fe-4S]-[ferredoxin] + 2 ADP + 2 phosphate = protochlorophyllide a + reduced 2[4Fe-4S]-[ferredoxin] + 2 ATP + 2 H2O</text>
        <dbReference type="Rhea" id="RHEA:28202"/>
        <dbReference type="Rhea" id="RHEA-COMP:10002"/>
        <dbReference type="Rhea" id="RHEA-COMP:10004"/>
        <dbReference type="ChEBI" id="CHEBI:15377"/>
        <dbReference type="ChEBI" id="CHEBI:30616"/>
        <dbReference type="ChEBI" id="CHEBI:33722"/>
        <dbReference type="ChEBI" id="CHEBI:33723"/>
        <dbReference type="ChEBI" id="CHEBI:43474"/>
        <dbReference type="ChEBI" id="CHEBI:83348"/>
        <dbReference type="ChEBI" id="CHEBI:83350"/>
        <dbReference type="ChEBI" id="CHEBI:456216"/>
        <dbReference type="EC" id="1.3.7.7"/>
    </reaction>
</comment>
<comment type="cofactor">
    <cofactor evidence="1">
        <name>[4Fe-4S] cluster</name>
        <dbReference type="ChEBI" id="CHEBI:49883"/>
    </cofactor>
    <text evidence="1">Binds 1 [4Fe-4S] cluster per dimer.</text>
</comment>
<comment type="pathway">
    <text evidence="1">Porphyrin-containing compound metabolism; bacteriochlorophyll biosynthesis (light-independent).</text>
</comment>
<comment type="subunit">
    <text evidence="1">Homodimer. Protochlorophyllide reductase is composed of three subunits; BchL, BchN and BchB.</text>
</comment>
<comment type="similarity">
    <text evidence="1">Belongs to the NifH/BchL/ChlL family.</text>
</comment>
<evidence type="ECO:0000255" key="1">
    <source>
        <dbReference type="HAMAP-Rule" id="MF_00355"/>
    </source>
</evidence>
<proteinExistence type="inferred from homology"/>